<sequence length="293" mass="32441">MFEGIGTAIVTPFKEGKLDIESYEKLLNFQINNQINAIIVLGTTGEAPNISLDEREILIKKAKEVSGNKAKVIVGAGSNGINHTIELIKNAEKNGADGLLIVTPYYNKPTQNGLYEYYKYISEHTDLEIIVYNVPSRTGINILPETVYKIASDCKNVKALKEANSSFEQINKDLLLLKELKDFKIFSGNDDTAFQLLASGGDGVISVASNIIPLQMVQMFNFIKNGEIEKARNIHFSYYKLFKNLFIETNPIPVKAALSIMGFINNELRLPLVPASESTMKIITETLKGCGVI</sequence>
<protein>
    <recommendedName>
        <fullName evidence="1">4-hydroxy-tetrahydrodipicolinate synthase</fullName>
        <shortName evidence="1">HTPA synthase</shortName>
        <ecNumber evidence="1">4.3.3.7</ecNumber>
    </recommendedName>
</protein>
<organism>
    <name type="scientific">Thermosipho africanus (strain TCF52B)</name>
    <dbReference type="NCBI Taxonomy" id="484019"/>
    <lineage>
        <taxon>Bacteria</taxon>
        <taxon>Thermotogati</taxon>
        <taxon>Thermotogota</taxon>
        <taxon>Thermotogae</taxon>
        <taxon>Thermotogales</taxon>
        <taxon>Fervidobacteriaceae</taxon>
        <taxon>Thermosipho</taxon>
    </lineage>
</organism>
<keyword id="KW-0028">Amino-acid biosynthesis</keyword>
<keyword id="KW-0963">Cytoplasm</keyword>
<keyword id="KW-0220">Diaminopimelate biosynthesis</keyword>
<keyword id="KW-0456">Lyase</keyword>
<keyword id="KW-0457">Lysine biosynthesis</keyword>
<keyword id="KW-1185">Reference proteome</keyword>
<keyword id="KW-0704">Schiff base</keyword>
<reference key="1">
    <citation type="journal article" date="2009" name="J. Bacteriol.">
        <title>The genome of Thermosipho africanus TCF52B: lateral genetic connections to the Firmicutes and Archaea.</title>
        <authorList>
            <person name="Nesboe C.L."/>
            <person name="Bapteste E."/>
            <person name="Curtis B."/>
            <person name="Dahle H."/>
            <person name="Lopez P."/>
            <person name="Macleod D."/>
            <person name="Dlutek M."/>
            <person name="Bowman S."/>
            <person name="Zhaxybayeva O."/>
            <person name="Birkeland N.-K."/>
            <person name="Doolittle W.F."/>
        </authorList>
    </citation>
    <scope>NUCLEOTIDE SEQUENCE [LARGE SCALE GENOMIC DNA]</scope>
    <source>
        <strain>TCF52B</strain>
    </source>
</reference>
<comment type="function">
    <text evidence="1">Catalyzes the condensation of (S)-aspartate-beta-semialdehyde [(S)-ASA] and pyruvate to 4-hydroxy-tetrahydrodipicolinate (HTPA).</text>
</comment>
<comment type="catalytic activity">
    <reaction evidence="1">
        <text>L-aspartate 4-semialdehyde + pyruvate = (2S,4S)-4-hydroxy-2,3,4,5-tetrahydrodipicolinate + H2O + H(+)</text>
        <dbReference type="Rhea" id="RHEA:34171"/>
        <dbReference type="ChEBI" id="CHEBI:15361"/>
        <dbReference type="ChEBI" id="CHEBI:15377"/>
        <dbReference type="ChEBI" id="CHEBI:15378"/>
        <dbReference type="ChEBI" id="CHEBI:67139"/>
        <dbReference type="ChEBI" id="CHEBI:537519"/>
        <dbReference type="EC" id="4.3.3.7"/>
    </reaction>
</comment>
<comment type="pathway">
    <text evidence="1">Amino-acid biosynthesis; L-lysine biosynthesis via DAP pathway; (S)-tetrahydrodipicolinate from L-aspartate: step 3/4.</text>
</comment>
<comment type="subunit">
    <text evidence="1">Homotetramer; dimer of dimers.</text>
</comment>
<comment type="subcellular location">
    <subcellularLocation>
        <location evidence="1">Cytoplasm</location>
    </subcellularLocation>
</comment>
<comment type="similarity">
    <text evidence="1">Belongs to the DapA family.</text>
</comment>
<comment type="caution">
    <text evidence="2">Was originally thought to be a dihydrodipicolinate synthase (DHDPS), catalyzing the condensation of (S)-aspartate-beta-semialdehyde [(S)-ASA] and pyruvate to dihydrodipicolinate (DHDP). However, it was shown in E.coli that the product of the enzymatic reaction is not dihydrodipicolinate but in fact (4S)-4-hydroxy-2,3,4,5-tetrahydro-(2S)-dipicolinic acid (HTPA), and that the consecutive dehydration reaction leading to DHDP is not spontaneous but catalyzed by DapB.</text>
</comment>
<proteinExistence type="inferred from homology"/>
<dbReference type="EC" id="4.3.3.7" evidence="1"/>
<dbReference type="EMBL" id="CP001185">
    <property type="protein sequence ID" value="ACJ74677.1"/>
    <property type="molecule type" value="Genomic_DNA"/>
</dbReference>
<dbReference type="RefSeq" id="WP_012579388.1">
    <property type="nucleotide sequence ID" value="NC_011653.1"/>
</dbReference>
<dbReference type="SMR" id="B7IF13"/>
<dbReference type="STRING" id="484019.THA_172"/>
<dbReference type="KEGG" id="taf:THA_172"/>
<dbReference type="eggNOG" id="COG0329">
    <property type="taxonomic scope" value="Bacteria"/>
</dbReference>
<dbReference type="HOGENOM" id="CLU_049343_7_0_0"/>
<dbReference type="OrthoDB" id="9782828at2"/>
<dbReference type="UniPathway" id="UPA00034">
    <property type="reaction ID" value="UER00017"/>
</dbReference>
<dbReference type="Proteomes" id="UP000002453">
    <property type="component" value="Chromosome"/>
</dbReference>
<dbReference type="GO" id="GO:0005829">
    <property type="term" value="C:cytosol"/>
    <property type="evidence" value="ECO:0007669"/>
    <property type="project" value="TreeGrafter"/>
</dbReference>
<dbReference type="GO" id="GO:0008840">
    <property type="term" value="F:4-hydroxy-tetrahydrodipicolinate synthase activity"/>
    <property type="evidence" value="ECO:0007669"/>
    <property type="project" value="UniProtKB-UniRule"/>
</dbReference>
<dbReference type="GO" id="GO:0019877">
    <property type="term" value="P:diaminopimelate biosynthetic process"/>
    <property type="evidence" value="ECO:0007669"/>
    <property type="project" value="UniProtKB-UniRule"/>
</dbReference>
<dbReference type="GO" id="GO:0009089">
    <property type="term" value="P:lysine biosynthetic process via diaminopimelate"/>
    <property type="evidence" value="ECO:0007669"/>
    <property type="project" value="UniProtKB-UniRule"/>
</dbReference>
<dbReference type="CDD" id="cd00950">
    <property type="entry name" value="DHDPS"/>
    <property type="match status" value="1"/>
</dbReference>
<dbReference type="Gene3D" id="3.20.20.70">
    <property type="entry name" value="Aldolase class I"/>
    <property type="match status" value="1"/>
</dbReference>
<dbReference type="HAMAP" id="MF_00418">
    <property type="entry name" value="DapA"/>
    <property type="match status" value="1"/>
</dbReference>
<dbReference type="InterPro" id="IPR013785">
    <property type="entry name" value="Aldolase_TIM"/>
</dbReference>
<dbReference type="InterPro" id="IPR005263">
    <property type="entry name" value="DapA"/>
</dbReference>
<dbReference type="InterPro" id="IPR002220">
    <property type="entry name" value="DapA-like"/>
</dbReference>
<dbReference type="InterPro" id="IPR020625">
    <property type="entry name" value="Schiff_base-form_aldolases_AS"/>
</dbReference>
<dbReference type="InterPro" id="IPR020624">
    <property type="entry name" value="Schiff_base-form_aldolases_CS"/>
</dbReference>
<dbReference type="NCBIfam" id="TIGR00674">
    <property type="entry name" value="dapA"/>
    <property type="match status" value="1"/>
</dbReference>
<dbReference type="PANTHER" id="PTHR12128:SF66">
    <property type="entry name" value="4-HYDROXY-2-OXOGLUTARATE ALDOLASE, MITOCHONDRIAL"/>
    <property type="match status" value="1"/>
</dbReference>
<dbReference type="PANTHER" id="PTHR12128">
    <property type="entry name" value="DIHYDRODIPICOLINATE SYNTHASE"/>
    <property type="match status" value="1"/>
</dbReference>
<dbReference type="Pfam" id="PF00701">
    <property type="entry name" value="DHDPS"/>
    <property type="match status" value="1"/>
</dbReference>
<dbReference type="PIRSF" id="PIRSF001365">
    <property type="entry name" value="DHDPS"/>
    <property type="match status" value="1"/>
</dbReference>
<dbReference type="PRINTS" id="PR00146">
    <property type="entry name" value="DHPICSNTHASE"/>
</dbReference>
<dbReference type="SMART" id="SM01130">
    <property type="entry name" value="DHDPS"/>
    <property type="match status" value="1"/>
</dbReference>
<dbReference type="SUPFAM" id="SSF51569">
    <property type="entry name" value="Aldolase"/>
    <property type="match status" value="1"/>
</dbReference>
<dbReference type="PROSITE" id="PS00665">
    <property type="entry name" value="DHDPS_1"/>
    <property type="match status" value="1"/>
</dbReference>
<dbReference type="PROSITE" id="PS00666">
    <property type="entry name" value="DHDPS_2"/>
    <property type="match status" value="1"/>
</dbReference>
<accession>B7IF13</accession>
<feature type="chain" id="PRO_1000124072" description="4-hydroxy-tetrahydrodipicolinate synthase">
    <location>
        <begin position="1"/>
        <end position="293"/>
    </location>
</feature>
<feature type="active site" description="Proton donor/acceptor" evidence="1">
    <location>
        <position position="132"/>
    </location>
</feature>
<feature type="active site" description="Schiff-base intermediate with substrate" evidence="1">
    <location>
        <position position="161"/>
    </location>
</feature>
<feature type="binding site" evidence="1">
    <location>
        <position position="44"/>
    </location>
    <ligand>
        <name>pyruvate</name>
        <dbReference type="ChEBI" id="CHEBI:15361"/>
    </ligand>
</feature>
<feature type="binding site" evidence="1">
    <location>
        <position position="205"/>
    </location>
    <ligand>
        <name>pyruvate</name>
        <dbReference type="ChEBI" id="CHEBI:15361"/>
    </ligand>
</feature>
<feature type="site" description="Part of a proton relay during catalysis" evidence="1">
    <location>
        <position position="43"/>
    </location>
</feature>
<feature type="site" description="Part of a proton relay during catalysis" evidence="1">
    <location>
        <position position="106"/>
    </location>
</feature>
<gene>
    <name evidence="1" type="primary">dapA</name>
    <name type="ordered locus">THA_172</name>
</gene>
<evidence type="ECO:0000255" key="1">
    <source>
        <dbReference type="HAMAP-Rule" id="MF_00418"/>
    </source>
</evidence>
<evidence type="ECO:0000305" key="2"/>
<name>DAPA_THEAB</name>